<protein>
    <recommendedName>
        <fullName>Protein CexE</fullName>
    </recommendedName>
    <alternativeName>
        <fullName>CfaD-dependent expression extracytoplasmic protein</fullName>
    </alternativeName>
</protein>
<keyword id="KW-0903">Direct protein sequencing</keyword>
<keyword id="KW-0574">Periplasm</keyword>
<keyword id="KW-0732">Signal</keyword>
<comment type="subcellular location">
    <subcellularLocation>
        <location evidence="1">Periplasm</location>
    </subcellularLocation>
</comment>
<comment type="induction">
    <text evidence="1">Transcriptionally induced by CfaD and Rns.</text>
</comment>
<name>CEXE_ECOLX</name>
<dbReference type="EMBL" id="EF205439">
    <property type="protein sequence ID" value="ABM92275.1"/>
    <property type="molecule type" value="Genomic_DNA"/>
</dbReference>
<dbReference type="RefSeq" id="WP_000759959.1">
    <property type="nucleotide sequence ID" value="NZ_UEMW01000058.1"/>
</dbReference>
<dbReference type="GO" id="GO:0042597">
    <property type="term" value="C:periplasmic space"/>
    <property type="evidence" value="ECO:0007669"/>
    <property type="project" value="UniProtKB-SubCell"/>
</dbReference>
<dbReference type="Gene3D" id="2.60.40.2290">
    <property type="match status" value="1"/>
</dbReference>
<dbReference type="InterPro" id="IPR053764">
    <property type="entry name" value="CellEnv_BiogenAssoc_sf"/>
</dbReference>
<reference key="1">
    <citation type="journal article" date="2007" name="J. Bacteriol.">
        <title>CfaD-dependent expression of a novel extracytoplasmic protein from enterotoxigenic Escherichia coli.</title>
        <authorList>
            <person name="Pilonieta M.C."/>
            <person name="Bodero M.D."/>
            <person name="Munson G.P."/>
        </authorList>
    </citation>
    <scope>NUCLEOTIDE SEQUENCE [GENOMIC DNA]</scope>
    <scope>PROTEIN SEQUENCE OF 20-29</scope>
    <scope>SUBCELLULAR LOCATION</scope>
    <scope>INDUCTION</scope>
    <source>
        <strain>O126:NM / 27D / ETEC</strain>
    </source>
</reference>
<gene>
    <name type="primary">cexE</name>
</gene>
<feature type="signal peptide" evidence="1">
    <location>
        <begin position="1"/>
        <end position="19"/>
    </location>
</feature>
<feature type="chain" id="PRO_5000246312" description="Protein CexE">
    <location>
        <begin position="20"/>
        <end position="120"/>
    </location>
</feature>
<accession>A2TJI4</accession>
<organism>
    <name type="scientific">Escherichia coli</name>
    <dbReference type="NCBI Taxonomy" id="562"/>
    <lineage>
        <taxon>Bacteria</taxon>
        <taxon>Pseudomonadati</taxon>
        <taxon>Pseudomonadota</taxon>
        <taxon>Gammaproteobacteria</taxon>
        <taxon>Enterobacterales</taxon>
        <taxon>Enterobacteriaceae</taxon>
        <taxon>Escherichia</taxon>
    </lineage>
</organism>
<proteinExistence type="evidence at protein level"/>
<evidence type="ECO:0000269" key="1">
    <source>
    </source>
</evidence>
<sequence>MKKYILGVILAMGSLSAIAGGGNSERPPSVAAGECVTFNSKLGEIGGYSWKYSNDACNETVAKGYAIGVAMHRTVNYEGGYSIQSSGIVKPGSDFIMKGGKTYKGHKKVSAGGDTPYWYK</sequence>